<keyword id="KW-0030">Aminoacyl-tRNA synthetase</keyword>
<keyword id="KW-0067">ATP-binding</keyword>
<keyword id="KW-0963">Cytoplasm</keyword>
<keyword id="KW-0436">Ligase</keyword>
<keyword id="KW-0547">Nucleotide-binding</keyword>
<keyword id="KW-0648">Protein biosynthesis</keyword>
<comment type="catalytic activity">
    <reaction evidence="1">
        <text>tRNA(Leu) + L-leucine + ATP = L-leucyl-tRNA(Leu) + AMP + diphosphate</text>
        <dbReference type="Rhea" id="RHEA:11688"/>
        <dbReference type="Rhea" id="RHEA-COMP:9613"/>
        <dbReference type="Rhea" id="RHEA-COMP:9622"/>
        <dbReference type="ChEBI" id="CHEBI:30616"/>
        <dbReference type="ChEBI" id="CHEBI:33019"/>
        <dbReference type="ChEBI" id="CHEBI:57427"/>
        <dbReference type="ChEBI" id="CHEBI:78442"/>
        <dbReference type="ChEBI" id="CHEBI:78494"/>
        <dbReference type="ChEBI" id="CHEBI:456215"/>
        <dbReference type="EC" id="6.1.1.4"/>
    </reaction>
</comment>
<comment type="subcellular location">
    <subcellularLocation>
        <location evidence="1">Cytoplasm</location>
    </subcellularLocation>
</comment>
<comment type="similarity">
    <text evidence="1">Belongs to the class-I aminoacyl-tRNA synthetase family.</text>
</comment>
<sequence length="857" mass="95500">MNSRYSPADLEQRWQTTWRSEGLDVTPEPEDGKGFYALSMFPYPSGTLHMGHVRNYVITDVIARVQRMRGHSVLHPMGWDAFGLPAENAAIERNVDPGDWTDRNIDQMRSQLDRLGLSIDWDREQATCHSDYYRWTQWLFLELFDGGLAYRKNATVNWDPVDQTVLANEQVDADGRSWRSGALVEQRQLNQWFLRITQYAEALLNDLDQLSGWPERVRTMQANWIGRSEGAEIQFKVSSDSDTTITVFTTRPDTLAGASCVVLAPDHPLVNSLTSPDQQDVVQAFQAEVARLSALERTSDDAPKRGVFTGATVLNPLNGRALPVWIADYVLVDYGTGAVMGVPAHDQRDRRFAQSYGLAVQQVIEAEGAAAAIAAGEAWTDPGVLIHSGDFDGLNSIEAKERITRHGEQQGWAVAKVTYRLRDWLISRQRYWGCPIPIIHCPSCGAVPVPREDLPVVLPRGIDLSGKGGSPLEQQQDWVNVPCPSCGEPAKRETDTMDTFMCSSWYFLRFADPHNTEQPFSREAVNRWLPVQQYVGGIEHAILHLLYSRFFTKALKDRGLIDVAEPFDRLLTQGMVQGTTYRNPSTGKYVASADVSDPETPTDPTSGEPLEVLFEKMSKSKYNGVDPAAVIDRYGADTARMFILFKAPPEKDLEWDDSDVEGQFRFLQRIWRLVESADSRIDSLEPEERPEPLADTDAKVRRAIHIAIDAVSEDLQDEIQLNTAISELMKLTNAITSVGVAELSTSVLKEALSTLLRLLAPFAPHLAEELWHQLGGTSSVHRAGWPELDPSALVQDSVDLVIQIKGKVRGTIQVPAAADKEQLEALALASEIAAKWLEGHPPRRVIVVPGKLVNLVP</sequence>
<protein>
    <recommendedName>
        <fullName evidence="1">Leucine--tRNA ligase</fullName>
        <ecNumber evidence="1">6.1.1.4</ecNumber>
    </recommendedName>
    <alternativeName>
        <fullName evidence="1">Leucyl-tRNA synthetase</fullName>
        <shortName evidence="1">LeuRS</shortName>
    </alternativeName>
</protein>
<accession>Q7U6T1</accession>
<gene>
    <name evidence="1" type="primary">leuS</name>
    <name type="ordered locus">SYNW1255</name>
</gene>
<reference key="1">
    <citation type="journal article" date="2003" name="Nature">
        <title>The genome of a motile marine Synechococcus.</title>
        <authorList>
            <person name="Palenik B."/>
            <person name="Brahamsha B."/>
            <person name="Larimer F.W."/>
            <person name="Land M.L."/>
            <person name="Hauser L."/>
            <person name="Chain P."/>
            <person name="Lamerdin J.E."/>
            <person name="Regala W."/>
            <person name="Allen E.E."/>
            <person name="McCarren J."/>
            <person name="Paulsen I.T."/>
            <person name="Dufresne A."/>
            <person name="Partensky F."/>
            <person name="Webb E.A."/>
            <person name="Waterbury J."/>
        </authorList>
    </citation>
    <scope>NUCLEOTIDE SEQUENCE [LARGE SCALE GENOMIC DNA]</scope>
    <source>
        <strain>WH8102</strain>
    </source>
</reference>
<feature type="chain" id="PRO_0000152104" description="Leucine--tRNA ligase">
    <location>
        <begin position="1"/>
        <end position="857"/>
    </location>
</feature>
<feature type="short sequence motif" description="'HIGH' region">
    <location>
        <begin position="42"/>
        <end position="52"/>
    </location>
</feature>
<feature type="short sequence motif" description="'KMSKS' region">
    <location>
        <begin position="616"/>
        <end position="620"/>
    </location>
</feature>
<feature type="binding site" evidence="1">
    <location>
        <position position="619"/>
    </location>
    <ligand>
        <name>ATP</name>
        <dbReference type="ChEBI" id="CHEBI:30616"/>
    </ligand>
</feature>
<organism>
    <name type="scientific">Parasynechococcus marenigrum (strain WH8102)</name>
    <dbReference type="NCBI Taxonomy" id="84588"/>
    <lineage>
        <taxon>Bacteria</taxon>
        <taxon>Bacillati</taxon>
        <taxon>Cyanobacteriota</taxon>
        <taxon>Cyanophyceae</taxon>
        <taxon>Synechococcales</taxon>
        <taxon>Prochlorococcaceae</taxon>
        <taxon>Parasynechococcus</taxon>
        <taxon>Parasynechococcus marenigrum</taxon>
    </lineage>
</organism>
<proteinExistence type="inferred from homology"/>
<evidence type="ECO:0000255" key="1">
    <source>
        <dbReference type="HAMAP-Rule" id="MF_00049"/>
    </source>
</evidence>
<name>SYL_PARMW</name>
<dbReference type="EC" id="6.1.1.4" evidence="1"/>
<dbReference type="EMBL" id="BX569692">
    <property type="protein sequence ID" value="CAE07770.1"/>
    <property type="molecule type" value="Genomic_DNA"/>
</dbReference>
<dbReference type="RefSeq" id="WP_011128119.1">
    <property type="nucleotide sequence ID" value="NC_005070.1"/>
</dbReference>
<dbReference type="SMR" id="Q7U6T1"/>
<dbReference type="STRING" id="84588.SYNW1255"/>
<dbReference type="KEGG" id="syw:SYNW1255"/>
<dbReference type="eggNOG" id="COG0495">
    <property type="taxonomic scope" value="Bacteria"/>
</dbReference>
<dbReference type="HOGENOM" id="CLU_004427_0_0_3"/>
<dbReference type="Proteomes" id="UP000001422">
    <property type="component" value="Chromosome"/>
</dbReference>
<dbReference type="GO" id="GO:0005829">
    <property type="term" value="C:cytosol"/>
    <property type="evidence" value="ECO:0007669"/>
    <property type="project" value="TreeGrafter"/>
</dbReference>
<dbReference type="GO" id="GO:0002161">
    <property type="term" value="F:aminoacyl-tRNA deacylase activity"/>
    <property type="evidence" value="ECO:0007669"/>
    <property type="project" value="InterPro"/>
</dbReference>
<dbReference type="GO" id="GO:0005524">
    <property type="term" value="F:ATP binding"/>
    <property type="evidence" value="ECO:0007669"/>
    <property type="project" value="UniProtKB-UniRule"/>
</dbReference>
<dbReference type="GO" id="GO:0004823">
    <property type="term" value="F:leucine-tRNA ligase activity"/>
    <property type="evidence" value="ECO:0007669"/>
    <property type="project" value="UniProtKB-UniRule"/>
</dbReference>
<dbReference type="GO" id="GO:0006429">
    <property type="term" value="P:leucyl-tRNA aminoacylation"/>
    <property type="evidence" value="ECO:0007669"/>
    <property type="project" value="UniProtKB-UniRule"/>
</dbReference>
<dbReference type="CDD" id="cd07958">
    <property type="entry name" value="Anticodon_Ia_Leu_BEm"/>
    <property type="match status" value="1"/>
</dbReference>
<dbReference type="CDD" id="cd00812">
    <property type="entry name" value="LeuRS_core"/>
    <property type="match status" value="1"/>
</dbReference>
<dbReference type="FunFam" id="3.40.50.620:FF:000003">
    <property type="entry name" value="Leucine--tRNA ligase"/>
    <property type="match status" value="1"/>
</dbReference>
<dbReference type="FunFam" id="1.10.730.10:FF:000011">
    <property type="entry name" value="Leucine--tRNA ligase chloroplastic/mitochondrial"/>
    <property type="match status" value="1"/>
</dbReference>
<dbReference type="FunFam" id="3.40.50.620:FF:000100">
    <property type="entry name" value="probable leucine--tRNA ligase, mitochondrial"/>
    <property type="match status" value="1"/>
</dbReference>
<dbReference type="Gene3D" id="3.40.50.620">
    <property type="entry name" value="HUPs"/>
    <property type="match status" value="2"/>
</dbReference>
<dbReference type="Gene3D" id="1.10.730.10">
    <property type="entry name" value="Isoleucyl-tRNA Synthetase, Domain 1"/>
    <property type="match status" value="1"/>
</dbReference>
<dbReference type="HAMAP" id="MF_00049_B">
    <property type="entry name" value="Leu_tRNA_synth_B"/>
    <property type="match status" value="1"/>
</dbReference>
<dbReference type="InterPro" id="IPR001412">
    <property type="entry name" value="aa-tRNA-synth_I_CS"/>
</dbReference>
<dbReference type="InterPro" id="IPR002300">
    <property type="entry name" value="aa-tRNA-synth_Ia"/>
</dbReference>
<dbReference type="InterPro" id="IPR002302">
    <property type="entry name" value="Leu-tRNA-ligase"/>
</dbReference>
<dbReference type="InterPro" id="IPR025709">
    <property type="entry name" value="Leu_tRNA-synth_edit"/>
</dbReference>
<dbReference type="InterPro" id="IPR013155">
    <property type="entry name" value="M/V/L/I-tRNA-synth_anticd-bd"/>
</dbReference>
<dbReference type="InterPro" id="IPR015413">
    <property type="entry name" value="Methionyl/Leucyl_tRNA_Synth"/>
</dbReference>
<dbReference type="InterPro" id="IPR014729">
    <property type="entry name" value="Rossmann-like_a/b/a_fold"/>
</dbReference>
<dbReference type="InterPro" id="IPR009080">
    <property type="entry name" value="tRNAsynth_Ia_anticodon-bd"/>
</dbReference>
<dbReference type="InterPro" id="IPR009008">
    <property type="entry name" value="Val/Leu/Ile-tRNA-synth_edit"/>
</dbReference>
<dbReference type="NCBIfam" id="TIGR00396">
    <property type="entry name" value="leuS_bact"/>
    <property type="match status" value="1"/>
</dbReference>
<dbReference type="PANTHER" id="PTHR43740:SF2">
    <property type="entry name" value="LEUCINE--TRNA LIGASE, MITOCHONDRIAL"/>
    <property type="match status" value="1"/>
</dbReference>
<dbReference type="PANTHER" id="PTHR43740">
    <property type="entry name" value="LEUCYL-TRNA SYNTHETASE"/>
    <property type="match status" value="1"/>
</dbReference>
<dbReference type="Pfam" id="PF08264">
    <property type="entry name" value="Anticodon_1"/>
    <property type="match status" value="1"/>
</dbReference>
<dbReference type="Pfam" id="PF00133">
    <property type="entry name" value="tRNA-synt_1"/>
    <property type="match status" value="2"/>
</dbReference>
<dbReference type="Pfam" id="PF13603">
    <property type="entry name" value="tRNA-synt_1_2"/>
    <property type="match status" value="1"/>
</dbReference>
<dbReference type="Pfam" id="PF09334">
    <property type="entry name" value="tRNA-synt_1g"/>
    <property type="match status" value="1"/>
</dbReference>
<dbReference type="PRINTS" id="PR00985">
    <property type="entry name" value="TRNASYNTHLEU"/>
</dbReference>
<dbReference type="SUPFAM" id="SSF47323">
    <property type="entry name" value="Anticodon-binding domain of a subclass of class I aminoacyl-tRNA synthetases"/>
    <property type="match status" value="1"/>
</dbReference>
<dbReference type="SUPFAM" id="SSF52374">
    <property type="entry name" value="Nucleotidylyl transferase"/>
    <property type="match status" value="1"/>
</dbReference>
<dbReference type="SUPFAM" id="SSF50677">
    <property type="entry name" value="ValRS/IleRS/LeuRS editing domain"/>
    <property type="match status" value="1"/>
</dbReference>
<dbReference type="PROSITE" id="PS00178">
    <property type="entry name" value="AA_TRNA_LIGASE_I"/>
    <property type="match status" value="1"/>
</dbReference>